<reference key="1">
    <citation type="journal article" date="2005" name="Science">
        <title>The genome of the basidiomycetous yeast and human pathogen Cryptococcus neoformans.</title>
        <authorList>
            <person name="Loftus B.J."/>
            <person name="Fung E."/>
            <person name="Roncaglia P."/>
            <person name="Rowley D."/>
            <person name="Amedeo P."/>
            <person name="Bruno D."/>
            <person name="Vamathevan J."/>
            <person name="Miranda M."/>
            <person name="Anderson I.J."/>
            <person name="Fraser J.A."/>
            <person name="Allen J.E."/>
            <person name="Bosdet I.E."/>
            <person name="Brent M.R."/>
            <person name="Chiu R."/>
            <person name="Doering T.L."/>
            <person name="Donlin M.J."/>
            <person name="D'Souza C.A."/>
            <person name="Fox D.S."/>
            <person name="Grinberg V."/>
            <person name="Fu J."/>
            <person name="Fukushima M."/>
            <person name="Haas B.J."/>
            <person name="Huang J.C."/>
            <person name="Janbon G."/>
            <person name="Jones S.J.M."/>
            <person name="Koo H.L."/>
            <person name="Krzywinski M.I."/>
            <person name="Kwon-Chung K.J."/>
            <person name="Lengeler K.B."/>
            <person name="Maiti R."/>
            <person name="Marra M.A."/>
            <person name="Marra R.E."/>
            <person name="Mathewson C.A."/>
            <person name="Mitchell T.G."/>
            <person name="Pertea M."/>
            <person name="Riggs F.R."/>
            <person name="Salzberg S.L."/>
            <person name="Schein J.E."/>
            <person name="Shvartsbeyn A."/>
            <person name="Shin H."/>
            <person name="Shumway M."/>
            <person name="Specht C.A."/>
            <person name="Suh B.B."/>
            <person name="Tenney A."/>
            <person name="Utterback T.R."/>
            <person name="Wickes B.L."/>
            <person name="Wortman J.R."/>
            <person name="Wye N.H."/>
            <person name="Kronstad J.W."/>
            <person name="Lodge J.K."/>
            <person name="Heitman J."/>
            <person name="Davis R.W."/>
            <person name="Fraser C.M."/>
            <person name="Hyman R.W."/>
        </authorList>
    </citation>
    <scope>NUCLEOTIDE SEQUENCE [LARGE SCALE GENOMIC DNA]</scope>
    <source>
        <strain>JEC21 / ATCC MYA-565</strain>
    </source>
</reference>
<sequence>MDAPVPAAPAFGGSWAKLNPPLSPWILDVINSMGFKNMTPVQAGTIPRAVKNQDCVVEAVTGSGKTLAFTIPVLERLSRREEPYKKGEIAAIVVAPTRELATQIHAVFHHFLSSLIPPESEEETGDVEAHAPPFASSSRSPSPQTPDKPLFPLPMLVTSGTPTPYETFQSTHPSILIGTPGRLAAFLLNPRGLAIVRVSELDVLVLDEADRLLSSPDHRRDVERIMRHLPKQRRTHLFSATMTDAVEEMIGLGLRNPVRIVVNLKDKRKDGEEPKERRTPMALQNTYLVCRHAEKTLQLIRLLLCESTKHERSKFIVYFSTCAAVDYFYRILSRLPSLSKFHLTSFHGELPPKIRETALSTFTSHPSSHLSPAVLLCTDVAARGVDFLDIDVVIQYDAPTDPKTFSHRAGRTARAGRRGKAVVLLGKGREEDYVDFLNIRKIPLTKQPYINAYLEEVDTPQALDPEATTLLHSIRQIILTDRELSDKAAKSFVSAFRAYSKHEASFIFRTLDFDFNSQAISFGLLRLPAMPEIKDWKKKKEAERQRLEKIKSEGGEVEEKEIIEWEDAGVNWDTFAYASRQREAARLATLAQRADNQSSNDAARAEARAKRKIKAEMREAWSEQKERKVRKEERKEKKDAKKKYEWELEQANGEGDRQSDLANIAKAQAERKKRREREEESWDEEIGKEYKSLKREIKEEKSVKESSKGGAGGGGIGGGMFDDLE</sequence>
<protein>
    <recommendedName>
        <fullName evidence="5">ATP-dependent rRNA helicase SPB4</fullName>
        <ecNumber evidence="1">3.6.4.13</ecNumber>
    </recommendedName>
</protein>
<comment type="function">
    <text evidence="1">ATP-binding RNA helicase involved in the biogenesis of 60S ribosomal subunits. Binds 90S pre-ribosomal particles and dissociates from pre-60S ribosomal particles after processing of 27SB pre-rRNA. Required for the normal formation of 18S rRNA through the processing of pre-rRNAs at sites A0, A1 and A2, and the normal formation of 25S and 5.8S rRNAs through the processing of pre-rRNAs at sites C1 and C2.</text>
</comment>
<comment type="catalytic activity">
    <reaction evidence="1">
        <text>ATP + H2O = ADP + phosphate + H(+)</text>
        <dbReference type="Rhea" id="RHEA:13065"/>
        <dbReference type="ChEBI" id="CHEBI:15377"/>
        <dbReference type="ChEBI" id="CHEBI:15378"/>
        <dbReference type="ChEBI" id="CHEBI:30616"/>
        <dbReference type="ChEBI" id="CHEBI:43474"/>
        <dbReference type="ChEBI" id="CHEBI:456216"/>
        <dbReference type="EC" id="3.6.4.13"/>
    </reaction>
</comment>
<comment type="subunit">
    <text evidence="1">Component of pre-60S ribosomal complexes.</text>
</comment>
<comment type="subcellular location">
    <subcellularLocation>
        <location evidence="1">Nucleus</location>
        <location evidence="1">Nucleolus</location>
    </subcellularLocation>
</comment>
<comment type="domain">
    <text>The Q motif is unique to and characteristic of the DEAD box family of RNA helicases and controls ATP binding and hydrolysis.</text>
</comment>
<comment type="similarity">
    <text evidence="5">Belongs to the DEAD box helicase family. DDX55/SPB4 subfamily.</text>
</comment>
<keyword id="KW-0067">ATP-binding</keyword>
<keyword id="KW-0175">Coiled coil</keyword>
<keyword id="KW-0347">Helicase</keyword>
<keyword id="KW-0378">Hydrolase</keyword>
<keyword id="KW-0547">Nucleotide-binding</keyword>
<keyword id="KW-0539">Nucleus</keyword>
<keyword id="KW-1185">Reference proteome</keyword>
<keyword id="KW-0690">Ribosome biogenesis</keyword>
<keyword id="KW-0694">RNA-binding</keyword>
<keyword id="KW-0698">rRNA processing</keyword>
<evidence type="ECO:0000250" key="1">
    <source>
        <dbReference type="UniProtKB" id="P25808"/>
    </source>
</evidence>
<evidence type="ECO:0000255" key="2">
    <source>
        <dbReference type="PROSITE-ProRule" id="PRU00541"/>
    </source>
</evidence>
<evidence type="ECO:0000255" key="3">
    <source>
        <dbReference type="PROSITE-ProRule" id="PRU00542"/>
    </source>
</evidence>
<evidence type="ECO:0000256" key="4">
    <source>
        <dbReference type="SAM" id="MobiDB-lite"/>
    </source>
</evidence>
<evidence type="ECO:0000305" key="5"/>
<accession>P0CR08</accession>
<accession>Q55IR0</accession>
<accession>Q5KCY8</accession>
<proteinExistence type="inferred from homology"/>
<name>SPB4_CRYNJ</name>
<gene>
    <name evidence="1" type="primary">SPB4</name>
    <name type="ordered locus">CNH02690</name>
</gene>
<feature type="chain" id="PRO_0000232326" description="ATP-dependent rRNA helicase SPB4">
    <location>
        <begin position="1"/>
        <end position="725"/>
    </location>
</feature>
<feature type="domain" description="Helicase ATP-binding" evidence="2">
    <location>
        <begin position="46"/>
        <end position="260"/>
    </location>
</feature>
<feature type="domain" description="Helicase C-terminal" evidence="3">
    <location>
        <begin position="295"/>
        <end position="458"/>
    </location>
</feature>
<feature type="region of interest" description="Disordered" evidence="4">
    <location>
        <begin position="119"/>
        <end position="156"/>
    </location>
</feature>
<feature type="region of interest" description="Disordered" evidence="4">
    <location>
        <begin position="591"/>
        <end position="725"/>
    </location>
</feature>
<feature type="short sequence motif" description="Q motif" evidence="5">
    <location>
        <begin position="15"/>
        <end position="43"/>
    </location>
</feature>
<feature type="short sequence motif" description="DEAD box" evidence="5">
    <location>
        <begin position="207"/>
        <end position="210"/>
    </location>
</feature>
<feature type="compositionally biased region" description="Low complexity" evidence="4">
    <location>
        <begin position="132"/>
        <end position="142"/>
    </location>
</feature>
<feature type="compositionally biased region" description="Pro residues" evidence="4">
    <location>
        <begin position="143"/>
        <end position="152"/>
    </location>
</feature>
<feature type="compositionally biased region" description="Basic and acidic residues" evidence="4">
    <location>
        <begin position="603"/>
        <end position="646"/>
    </location>
</feature>
<feature type="compositionally biased region" description="Basic and acidic residues" evidence="4">
    <location>
        <begin position="685"/>
        <end position="707"/>
    </location>
</feature>
<feature type="compositionally biased region" description="Gly residues" evidence="4">
    <location>
        <begin position="709"/>
        <end position="725"/>
    </location>
</feature>
<feature type="binding site" evidence="2">
    <location>
        <begin position="59"/>
        <end position="66"/>
    </location>
    <ligand>
        <name>ATP</name>
        <dbReference type="ChEBI" id="CHEBI:30616"/>
    </ligand>
</feature>
<dbReference type="EC" id="3.6.4.13" evidence="1"/>
<dbReference type="EMBL" id="AE017348">
    <property type="protein sequence ID" value="AAW45135.2"/>
    <property type="molecule type" value="Genomic_DNA"/>
</dbReference>
<dbReference type="RefSeq" id="XP_572442.1">
    <property type="nucleotide sequence ID" value="XM_572442.1"/>
</dbReference>
<dbReference type="SMR" id="P0CR08"/>
<dbReference type="FunCoup" id="P0CR08">
    <property type="interactions" value="869"/>
</dbReference>
<dbReference type="STRING" id="214684.P0CR08"/>
<dbReference type="PaxDb" id="214684-P0CR08"/>
<dbReference type="eggNOG" id="KOG0345">
    <property type="taxonomic scope" value="Eukaryota"/>
</dbReference>
<dbReference type="HOGENOM" id="CLU_003041_26_4_1"/>
<dbReference type="InParanoid" id="P0CR08"/>
<dbReference type="Proteomes" id="UP000002149">
    <property type="component" value="Chromosome 8"/>
</dbReference>
<dbReference type="GO" id="GO:0030686">
    <property type="term" value="C:90S preribosome"/>
    <property type="evidence" value="ECO:0007669"/>
    <property type="project" value="EnsemblFungi"/>
</dbReference>
<dbReference type="GO" id="GO:0005730">
    <property type="term" value="C:nucleolus"/>
    <property type="evidence" value="ECO:0000318"/>
    <property type="project" value="GO_Central"/>
</dbReference>
<dbReference type="GO" id="GO:0005654">
    <property type="term" value="C:nucleoplasm"/>
    <property type="evidence" value="ECO:0007669"/>
    <property type="project" value="EnsemblFungi"/>
</dbReference>
<dbReference type="GO" id="GO:0030687">
    <property type="term" value="C:preribosome, large subunit precursor"/>
    <property type="evidence" value="ECO:0007669"/>
    <property type="project" value="EnsemblFungi"/>
</dbReference>
<dbReference type="GO" id="GO:0005524">
    <property type="term" value="F:ATP binding"/>
    <property type="evidence" value="ECO:0007669"/>
    <property type="project" value="UniProtKB-KW"/>
</dbReference>
<dbReference type="GO" id="GO:0016887">
    <property type="term" value="F:ATP hydrolysis activity"/>
    <property type="evidence" value="ECO:0007669"/>
    <property type="project" value="RHEA"/>
</dbReference>
<dbReference type="GO" id="GO:0003723">
    <property type="term" value="F:RNA binding"/>
    <property type="evidence" value="ECO:0007669"/>
    <property type="project" value="UniProtKB-KW"/>
</dbReference>
<dbReference type="GO" id="GO:0003724">
    <property type="term" value="F:RNA helicase activity"/>
    <property type="evidence" value="ECO:0007669"/>
    <property type="project" value="UniProtKB-EC"/>
</dbReference>
<dbReference type="GO" id="GO:1902626">
    <property type="term" value="P:assembly of large subunit precursor of preribosome"/>
    <property type="evidence" value="ECO:0007669"/>
    <property type="project" value="EnsemblFungi"/>
</dbReference>
<dbReference type="GO" id="GO:0000470">
    <property type="term" value="P:maturation of LSU-rRNA"/>
    <property type="evidence" value="ECO:0007669"/>
    <property type="project" value="EnsemblFungi"/>
</dbReference>
<dbReference type="CDD" id="cd17960">
    <property type="entry name" value="DEADc_DDX55"/>
    <property type="match status" value="1"/>
</dbReference>
<dbReference type="CDD" id="cd18787">
    <property type="entry name" value="SF2_C_DEAD"/>
    <property type="match status" value="1"/>
</dbReference>
<dbReference type="Gene3D" id="3.40.50.300">
    <property type="entry name" value="P-loop containing nucleotide triphosphate hydrolases"/>
    <property type="match status" value="2"/>
</dbReference>
<dbReference type="InterPro" id="IPR011545">
    <property type="entry name" value="DEAD/DEAH_box_helicase_dom"/>
</dbReference>
<dbReference type="InterPro" id="IPR014001">
    <property type="entry name" value="Helicase_ATP-bd"/>
</dbReference>
<dbReference type="InterPro" id="IPR001650">
    <property type="entry name" value="Helicase_C-like"/>
</dbReference>
<dbReference type="InterPro" id="IPR027417">
    <property type="entry name" value="P-loop_NTPase"/>
</dbReference>
<dbReference type="InterPro" id="IPR000629">
    <property type="entry name" value="RNA-helicase_DEAD-box_CS"/>
</dbReference>
<dbReference type="InterPro" id="IPR014014">
    <property type="entry name" value="RNA_helicase_DEAD_Q_motif"/>
</dbReference>
<dbReference type="InterPro" id="IPR025313">
    <property type="entry name" value="SPB4-like_CTE"/>
</dbReference>
<dbReference type="PANTHER" id="PTHR24031">
    <property type="entry name" value="RNA HELICASE"/>
    <property type="match status" value="1"/>
</dbReference>
<dbReference type="Pfam" id="PF13959">
    <property type="entry name" value="CTE_SPB4"/>
    <property type="match status" value="1"/>
</dbReference>
<dbReference type="Pfam" id="PF00270">
    <property type="entry name" value="DEAD"/>
    <property type="match status" value="2"/>
</dbReference>
<dbReference type="Pfam" id="PF00271">
    <property type="entry name" value="Helicase_C"/>
    <property type="match status" value="1"/>
</dbReference>
<dbReference type="SMART" id="SM00487">
    <property type="entry name" value="DEXDc"/>
    <property type="match status" value="1"/>
</dbReference>
<dbReference type="SMART" id="SM01178">
    <property type="entry name" value="DUF4217"/>
    <property type="match status" value="1"/>
</dbReference>
<dbReference type="SMART" id="SM00490">
    <property type="entry name" value="HELICc"/>
    <property type="match status" value="1"/>
</dbReference>
<dbReference type="SUPFAM" id="SSF52540">
    <property type="entry name" value="P-loop containing nucleoside triphosphate hydrolases"/>
    <property type="match status" value="1"/>
</dbReference>
<dbReference type="PROSITE" id="PS00039">
    <property type="entry name" value="DEAD_ATP_HELICASE"/>
    <property type="match status" value="1"/>
</dbReference>
<dbReference type="PROSITE" id="PS51192">
    <property type="entry name" value="HELICASE_ATP_BIND_1"/>
    <property type="match status" value="1"/>
</dbReference>
<dbReference type="PROSITE" id="PS51194">
    <property type="entry name" value="HELICASE_CTER"/>
    <property type="match status" value="1"/>
</dbReference>
<dbReference type="PROSITE" id="PS51195">
    <property type="entry name" value="Q_MOTIF"/>
    <property type="match status" value="1"/>
</dbReference>
<organism>
    <name type="scientific">Cryptococcus neoformans var. neoformans serotype D (strain JEC21 / ATCC MYA-565)</name>
    <name type="common">Filobasidiella neoformans</name>
    <dbReference type="NCBI Taxonomy" id="214684"/>
    <lineage>
        <taxon>Eukaryota</taxon>
        <taxon>Fungi</taxon>
        <taxon>Dikarya</taxon>
        <taxon>Basidiomycota</taxon>
        <taxon>Agaricomycotina</taxon>
        <taxon>Tremellomycetes</taxon>
        <taxon>Tremellales</taxon>
        <taxon>Cryptococcaceae</taxon>
        <taxon>Cryptococcus</taxon>
        <taxon>Cryptococcus neoformans species complex</taxon>
    </lineage>
</organism>